<name>PYRG_SHIF8</name>
<protein>
    <recommendedName>
        <fullName evidence="1">CTP synthase</fullName>
        <ecNumber evidence="1">6.3.4.2</ecNumber>
    </recommendedName>
    <alternativeName>
        <fullName evidence="1">Cytidine 5'-triphosphate synthase</fullName>
    </alternativeName>
    <alternativeName>
        <fullName evidence="1">Cytidine triphosphate synthetase</fullName>
        <shortName evidence="1">CTP synthetase</shortName>
        <shortName evidence="1">CTPS</shortName>
    </alternativeName>
    <alternativeName>
        <fullName evidence="1">UTP--ammonia ligase</fullName>
    </alternativeName>
</protein>
<reference key="1">
    <citation type="journal article" date="2006" name="BMC Genomics">
        <title>Complete genome sequence of Shigella flexneri 5b and comparison with Shigella flexneri 2a.</title>
        <authorList>
            <person name="Nie H."/>
            <person name="Yang F."/>
            <person name="Zhang X."/>
            <person name="Yang J."/>
            <person name="Chen L."/>
            <person name="Wang J."/>
            <person name="Xiong Z."/>
            <person name="Peng J."/>
            <person name="Sun L."/>
            <person name="Dong J."/>
            <person name="Xue Y."/>
            <person name="Xu X."/>
            <person name="Chen S."/>
            <person name="Yao Z."/>
            <person name="Shen Y."/>
            <person name="Jin Q."/>
        </authorList>
    </citation>
    <scope>NUCLEOTIDE SEQUENCE [LARGE SCALE GENOMIC DNA]</scope>
    <source>
        <strain>8401</strain>
    </source>
</reference>
<sequence length="545" mass="60374">MTTNYIFVTGGVVSSLGKGIAAASLAAILEARGLNVTIMKLDPYINVDPGTMSPIQHGEVFVTEDGAETDLDLGHYERFIRTKMSRRNNFTTGRIYSDVLRKERRGDYLGATVQVIPHITNAIKERVLEGGEGHDVVLVEIGGTVGDIESLPFLEAIRQMAVEIGREHTLFMHLTLVPYMAASGEVKTKPTQHSVKELLSIGIQPDILICRSDRAVPANERAKIALFCNVPEKAVISLKDVDSIYKIPGLLKSQGLDDYICKRFSLNCPEANLSEWEQVIFEEANPVSEVTIGMVGKYIELPDAYKSVIEALKHGGLKNRVSVNIKLIDSQDVETRGVEILKGLDAILVPGGFGYRGVEGMITTARFARENNIPYLGICLGMQVALIDYARHVANMENANSTEFVPDCKYPVVALITEWRDENGNVEVRSEKSDLGGTMRLGAQQCQLVDDSLVRQLYNAPTIVERHRHRYEVNNMLLKQIEDAGLRVAGRSGDDQLVEIIEVPNHPWFVACQFHPEFTSTPRDGHPLFAGFVKAASEFQKRQAK</sequence>
<dbReference type="EC" id="6.3.4.2" evidence="1"/>
<dbReference type="EMBL" id="CP000266">
    <property type="protein sequence ID" value="ABF04767.1"/>
    <property type="molecule type" value="Genomic_DNA"/>
</dbReference>
<dbReference type="RefSeq" id="WP_000210878.1">
    <property type="nucleotide sequence ID" value="NC_008258.1"/>
</dbReference>
<dbReference type="SMR" id="Q0T1P8"/>
<dbReference type="GeneID" id="93779218"/>
<dbReference type="KEGG" id="sfv:SFV_2675"/>
<dbReference type="HOGENOM" id="CLU_011675_5_0_6"/>
<dbReference type="UniPathway" id="UPA00159">
    <property type="reaction ID" value="UER00277"/>
</dbReference>
<dbReference type="Proteomes" id="UP000000659">
    <property type="component" value="Chromosome"/>
</dbReference>
<dbReference type="GO" id="GO:0005829">
    <property type="term" value="C:cytosol"/>
    <property type="evidence" value="ECO:0007669"/>
    <property type="project" value="TreeGrafter"/>
</dbReference>
<dbReference type="GO" id="GO:0005524">
    <property type="term" value="F:ATP binding"/>
    <property type="evidence" value="ECO:0007669"/>
    <property type="project" value="UniProtKB-KW"/>
</dbReference>
<dbReference type="GO" id="GO:0003883">
    <property type="term" value="F:CTP synthase activity"/>
    <property type="evidence" value="ECO:0007669"/>
    <property type="project" value="UniProtKB-UniRule"/>
</dbReference>
<dbReference type="GO" id="GO:0004359">
    <property type="term" value="F:glutaminase activity"/>
    <property type="evidence" value="ECO:0007669"/>
    <property type="project" value="RHEA"/>
</dbReference>
<dbReference type="GO" id="GO:0042802">
    <property type="term" value="F:identical protein binding"/>
    <property type="evidence" value="ECO:0007669"/>
    <property type="project" value="TreeGrafter"/>
</dbReference>
<dbReference type="GO" id="GO:0046872">
    <property type="term" value="F:metal ion binding"/>
    <property type="evidence" value="ECO:0007669"/>
    <property type="project" value="UniProtKB-KW"/>
</dbReference>
<dbReference type="GO" id="GO:0044210">
    <property type="term" value="P:'de novo' CTP biosynthetic process"/>
    <property type="evidence" value="ECO:0007669"/>
    <property type="project" value="UniProtKB-UniRule"/>
</dbReference>
<dbReference type="GO" id="GO:0019856">
    <property type="term" value="P:pyrimidine nucleobase biosynthetic process"/>
    <property type="evidence" value="ECO:0007669"/>
    <property type="project" value="TreeGrafter"/>
</dbReference>
<dbReference type="CDD" id="cd03113">
    <property type="entry name" value="CTPS_N"/>
    <property type="match status" value="1"/>
</dbReference>
<dbReference type="CDD" id="cd01746">
    <property type="entry name" value="GATase1_CTP_Synthase"/>
    <property type="match status" value="1"/>
</dbReference>
<dbReference type="FunFam" id="3.40.50.300:FF:000009">
    <property type="entry name" value="CTP synthase"/>
    <property type="match status" value="1"/>
</dbReference>
<dbReference type="FunFam" id="3.40.50.880:FF:000002">
    <property type="entry name" value="CTP synthase"/>
    <property type="match status" value="1"/>
</dbReference>
<dbReference type="Gene3D" id="3.40.50.880">
    <property type="match status" value="1"/>
</dbReference>
<dbReference type="Gene3D" id="3.40.50.300">
    <property type="entry name" value="P-loop containing nucleotide triphosphate hydrolases"/>
    <property type="match status" value="1"/>
</dbReference>
<dbReference type="HAMAP" id="MF_01227">
    <property type="entry name" value="PyrG"/>
    <property type="match status" value="1"/>
</dbReference>
<dbReference type="InterPro" id="IPR029062">
    <property type="entry name" value="Class_I_gatase-like"/>
</dbReference>
<dbReference type="InterPro" id="IPR004468">
    <property type="entry name" value="CTP_synthase"/>
</dbReference>
<dbReference type="InterPro" id="IPR017456">
    <property type="entry name" value="CTP_synthase_N"/>
</dbReference>
<dbReference type="InterPro" id="IPR017926">
    <property type="entry name" value="GATASE"/>
</dbReference>
<dbReference type="InterPro" id="IPR033828">
    <property type="entry name" value="GATase1_CTP_Synthase"/>
</dbReference>
<dbReference type="InterPro" id="IPR027417">
    <property type="entry name" value="P-loop_NTPase"/>
</dbReference>
<dbReference type="NCBIfam" id="NF003792">
    <property type="entry name" value="PRK05380.1"/>
    <property type="match status" value="1"/>
</dbReference>
<dbReference type="NCBIfam" id="TIGR00337">
    <property type="entry name" value="PyrG"/>
    <property type="match status" value="1"/>
</dbReference>
<dbReference type="PANTHER" id="PTHR11550">
    <property type="entry name" value="CTP SYNTHASE"/>
    <property type="match status" value="1"/>
</dbReference>
<dbReference type="PANTHER" id="PTHR11550:SF0">
    <property type="entry name" value="CTP SYNTHASE-RELATED"/>
    <property type="match status" value="1"/>
</dbReference>
<dbReference type="Pfam" id="PF06418">
    <property type="entry name" value="CTP_synth_N"/>
    <property type="match status" value="1"/>
</dbReference>
<dbReference type="Pfam" id="PF00117">
    <property type="entry name" value="GATase"/>
    <property type="match status" value="1"/>
</dbReference>
<dbReference type="SUPFAM" id="SSF52317">
    <property type="entry name" value="Class I glutamine amidotransferase-like"/>
    <property type="match status" value="1"/>
</dbReference>
<dbReference type="SUPFAM" id="SSF52540">
    <property type="entry name" value="P-loop containing nucleoside triphosphate hydrolases"/>
    <property type="match status" value="1"/>
</dbReference>
<dbReference type="PROSITE" id="PS51273">
    <property type="entry name" value="GATASE_TYPE_1"/>
    <property type="match status" value="1"/>
</dbReference>
<proteinExistence type="inferred from homology"/>
<keyword id="KW-0067">ATP-binding</keyword>
<keyword id="KW-0315">Glutamine amidotransferase</keyword>
<keyword id="KW-0436">Ligase</keyword>
<keyword id="KW-0460">Magnesium</keyword>
<keyword id="KW-0479">Metal-binding</keyword>
<keyword id="KW-0547">Nucleotide-binding</keyword>
<keyword id="KW-0665">Pyrimidine biosynthesis</keyword>
<organism>
    <name type="scientific">Shigella flexneri serotype 5b (strain 8401)</name>
    <dbReference type="NCBI Taxonomy" id="373384"/>
    <lineage>
        <taxon>Bacteria</taxon>
        <taxon>Pseudomonadati</taxon>
        <taxon>Pseudomonadota</taxon>
        <taxon>Gammaproteobacteria</taxon>
        <taxon>Enterobacterales</taxon>
        <taxon>Enterobacteriaceae</taxon>
        <taxon>Shigella</taxon>
    </lineage>
</organism>
<comment type="function">
    <text evidence="1">Catalyzes the ATP-dependent amination of UTP to CTP with either L-glutamine or ammonia as the source of nitrogen. Regulates intracellular CTP levels through interactions with the four ribonucleotide triphosphates.</text>
</comment>
<comment type="catalytic activity">
    <reaction evidence="1">
        <text>UTP + L-glutamine + ATP + H2O = CTP + L-glutamate + ADP + phosphate + 2 H(+)</text>
        <dbReference type="Rhea" id="RHEA:26426"/>
        <dbReference type="ChEBI" id="CHEBI:15377"/>
        <dbReference type="ChEBI" id="CHEBI:15378"/>
        <dbReference type="ChEBI" id="CHEBI:29985"/>
        <dbReference type="ChEBI" id="CHEBI:30616"/>
        <dbReference type="ChEBI" id="CHEBI:37563"/>
        <dbReference type="ChEBI" id="CHEBI:43474"/>
        <dbReference type="ChEBI" id="CHEBI:46398"/>
        <dbReference type="ChEBI" id="CHEBI:58359"/>
        <dbReference type="ChEBI" id="CHEBI:456216"/>
        <dbReference type="EC" id="6.3.4.2"/>
    </reaction>
</comment>
<comment type="catalytic activity">
    <reaction evidence="1">
        <text>L-glutamine + H2O = L-glutamate + NH4(+)</text>
        <dbReference type="Rhea" id="RHEA:15889"/>
        <dbReference type="ChEBI" id="CHEBI:15377"/>
        <dbReference type="ChEBI" id="CHEBI:28938"/>
        <dbReference type="ChEBI" id="CHEBI:29985"/>
        <dbReference type="ChEBI" id="CHEBI:58359"/>
    </reaction>
</comment>
<comment type="catalytic activity">
    <reaction evidence="1">
        <text>UTP + NH4(+) + ATP = CTP + ADP + phosphate + 2 H(+)</text>
        <dbReference type="Rhea" id="RHEA:16597"/>
        <dbReference type="ChEBI" id="CHEBI:15378"/>
        <dbReference type="ChEBI" id="CHEBI:28938"/>
        <dbReference type="ChEBI" id="CHEBI:30616"/>
        <dbReference type="ChEBI" id="CHEBI:37563"/>
        <dbReference type="ChEBI" id="CHEBI:43474"/>
        <dbReference type="ChEBI" id="CHEBI:46398"/>
        <dbReference type="ChEBI" id="CHEBI:456216"/>
    </reaction>
</comment>
<comment type="activity regulation">
    <text evidence="1">Allosterically activated by GTP, when glutamine is the substrate; GTP has no effect on the reaction when ammonia is the substrate. The allosteric effector GTP functions by stabilizing the protein conformation that binds the tetrahedral intermediate(s) formed during glutamine hydrolysis. Inhibited by the product CTP, via allosteric rather than competitive inhibition.</text>
</comment>
<comment type="pathway">
    <text evidence="1">Pyrimidine metabolism; CTP biosynthesis via de novo pathway; CTP from UDP: step 2/2.</text>
</comment>
<comment type="subunit">
    <text evidence="1">Homotetramer.</text>
</comment>
<comment type="miscellaneous">
    <text evidence="1">CTPSs have evolved a hybrid strategy for distinguishing between UTP and CTP. The overlapping regions of the product feedback inhibitory and substrate sites recognize a common feature in both compounds, the triphosphate moiety. To differentiate isosteric substrate and product pyrimidine rings, an additional pocket far from the expected kinase/ligase catalytic site, specifically recognizes the cytosine and ribose portions of the product inhibitor.</text>
</comment>
<comment type="similarity">
    <text evidence="1">Belongs to the CTP synthase family.</text>
</comment>
<evidence type="ECO:0000255" key="1">
    <source>
        <dbReference type="HAMAP-Rule" id="MF_01227"/>
    </source>
</evidence>
<feature type="chain" id="PRO_1000139580" description="CTP synthase">
    <location>
        <begin position="1"/>
        <end position="545"/>
    </location>
</feature>
<feature type="domain" description="Glutamine amidotransferase type-1" evidence="1">
    <location>
        <begin position="291"/>
        <end position="542"/>
    </location>
</feature>
<feature type="region of interest" description="Amidoligase domain" evidence="1">
    <location>
        <begin position="1"/>
        <end position="266"/>
    </location>
</feature>
<feature type="active site" description="Nucleophile; for glutamine hydrolysis" evidence="1">
    <location>
        <position position="379"/>
    </location>
</feature>
<feature type="active site" evidence="1">
    <location>
        <position position="515"/>
    </location>
</feature>
<feature type="active site" evidence="1">
    <location>
        <position position="517"/>
    </location>
</feature>
<feature type="binding site" evidence="1">
    <location>
        <position position="14"/>
    </location>
    <ligand>
        <name>CTP</name>
        <dbReference type="ChEBI" id="CHEBI:37563"/>
        <note>allosteric inhibitor</note>
    </ligand>
</feature>
<feature type="binding site" evidence="1">
    <location>
        <position position="14"/>
    </location>
    <ligand>
        <name>UTP</name>
        <dbReference type="ChEBI" id="CHEBI:46398"/>
    </ligand>
</feature>
<feature type="binding site" evidence="1">
    <location>
        <begin position="15"/>
        <end position="20"/>
    </location>
    <ligand>
        <name>ATP</name>
        <dbReference type="ChEBI" id="CHEBI:30616"/>
    </ligand>
</feature>
<feature type="binding site" evidence="1">
    <location>
        <position position="72"/>
    </location>
    <ligand>
        <name>ATP</name>
        <dbReference type="ChEBI" id="CHEBI:30616"/>
    </ligand>
</feature>
<feature type="binding site" evidence="1">
    <location>
        <position position="72"/>
    </location>
    <ligand>
        <name>Mg(2+)</name>
        <dbReference type="ChEBI" id="CHEBI:18420"/>
    </ligand>
</feature>
<feature type="binding site" evidence="1">
    <location>
        <position position="140"/>
    </location>
    <ligand>
        <name>Mg(2+)</name>
        <dbReference type="ChEBI" id="CHEBI:18420"/>
    </ligand>
</feature>
<feature type="binding site" evidence="1">
    <location>
        <begin position="147"/>
        <end position="149"/>
    </location>
    <ligand>
        <name>CTP</name>
        <dbReference type="ChEBI" id="CHEBI:37563"/>
        <note>allosteric inhibitor</note>
    </ligand>
</feature>
<feature type="binding site" evidence="1">
    <location>
        <begin position="187"/>
        <end position="192"/>
    </location>
    <ligand>
        <name>CTP</name>
        <dbReference type="ChEBI" id="CHEBI:37563"/>
        <note>allosteric inhibitor</note>
    </ligand>
</feature>
<feature type="binding site" evidence="1">
    <location>
        <begin position="187"/>
        <end position="192"/>
    </location>
    <ligand>
        <name>UTP</name>
        <dbReference type="ChEBI" id="CHEBI:46398"/>
    </ligand>
</feature>
<feature type="binding site" evidence="1">
    <location>
        <position position="223"/>
    </location>
    <ligand>
        <name>CTP</name>
        <dbReference type="ChEBI" id="CHEBI:37563"/>
        <note>allosteric inhibitor</note>
    </ligand>
</feature>
<feature type="binding site" evidence="1">
    <location>
        <position position="223"/>
    </location>
    <ligand>
        <name>UTP</name>
        <dbReference type="ChEBI" id="CHEBI:46398"/>
    </ligand>
</feature>
<feature type="binding site" evidence="1">
    <location>
        <begin position="239"/>
        <end position="241"/>
    </location>
    <ligand>
        <name>ATP</name>
        <dbReference type="ChEBI" id="CHEBI:30616"/>
    </ligand>
</feature>
<feature type="binding site" evidence="1">
    <location>
        <position position="352"/>
    </location>
    <ligand>
        <name>L-glutamine</name>
        <dbReference type="ChEBI" id="CHEBI:58359"/>
    </ligand>
</feature>
<feature type="binding site" evidence="1">
    <location>
        <begin position="380"/>
        <end position="383"/>
    </location>
    <ligand>
        <name>L-glutamine</name>
        <dbReference type="ChEBI" id="CHEBI:58359"/>
    </ligand>
</feature>
<feature type="binding site" evidence="1">
    <location>
        <position position="403"/>
    </location>
    <ligand>
        <name>L-glutamine</name>
        <dbReference type="ChEBI" id="CHEBI:58359"/>
    </ligand>
</feature>
<feature type="binding site" evidence="1">
    <location>
        <position position="470"/>
    </location>
    <ligand>
        <name>L-glutamine</name>
        <dbReference type="ChEBI" id="CHEBI:58359"/>
    </ligand>
</feature>
<accession>Q0T1P8</accession>
<gene>
    <name evidence="1" type="primary">pyrG</name>
    <name type="ordered locus">SFV_2675</name>
</gene>